<proteinExistence type="inferred from homology"/>
<comment type="function">
    <text evidence="1">One of the essential components for the initiation of protein synthesis. Stabilizes the binding of IF-2 and IF-3 on the 30S subunit to which N-formylmethionyl-tRNA(fMet) subsequently binds. Helps modulate mRNA selection, yielding the 30S pre-initiation complex (PIC). Upon addition of the 50S ribosomal subunit IF-1, IF-2 and IF-3 are released leaving the mature 70S translation initiation complex.</text>
</comment>
<comment type="subunit">
    <text evidence="1">Component of the 30S ribosomal translation pre-initiation complex which assembles on the 30S ribosome in the order IF-2 and IF-3, IF-1 and N-formylmethionyl-tRNA(fMet); mRNA recruitment can occur at any time during PIC assembly.</text>
</comment>
<comment type="subcellular location">
    <subcellularLocation>
        <location evidence="1">Cytoplasm</location>
    </subcellularLocation>
</comment>
<comment type="similarity">
    <text evidence="1">Belongs to the IF-1 family.</text>
</comment>
<reference key="1">
    <citation type="journal article" date="2003" name="Nat. Biotechnol.">
        <title>The genome sequence of the entomopathogenic bacterium Photorhabdus luminescens.</title>
        <authorList>
            <person name="Duchaud E."/>
            <person name="Rusniok C."/>
            <person name="Frangeul L."/>
            <person name="Buchrieser C."/>
            <person name="Givaudan A."/>
            <person name="Taourit S."/>
            <person name="Bocs S."/>
            <person name="Boursaux-Eude C."/>
            <person name="Chandler M."/>
            <person name="Charles J.-F."/>
            <person name="Dassa E."/>
            <person name="Derose R."/>
            <person name="Derzelle S."/>
            <person name="Freyssinet G."/>
            <person name="Gaudriault S."/>
            <person name="Medigue C."/>
            <person name="Lanois A."/>
            <person name="Powell K."/>
            <person name="Siguier P."/>
            <person name="Vincent R."/>
            <person name="Wingate V."/>
            <person name="Zouine M."/>
            <person name="Glaser P."/>
            <person name="Boemare N."/>
            <person name="Danchin A."/>
            <person name="Kunst F."/>
        </authorList>
    </citation>
    <scope>NUCLEOTIDE SEQUENCE [LARGE SCALE GENOMIC DNA]</scope>
    <source>
        <strain>DSM 15139 / CIP 105565 / TT01</strain>
    </source>
</reference>
<gene>
    <name evidence="1" type="primary">infA</name>
    <name type="ordered locus">plu1595</name>
</gene>
<protein>
    <recommendedName>
        <fullName evidence="1">Translation initiation factor IF-1</fullName>
    </recommendedName>
</protein>
<keyword id="KW-0963">Cytoplasm</keyword>
<keyword id="KW-0396">Initiation factor</keyword>
<keyword id="KW-0648">Protein biosynthesis</keyword>
<keyword id="KW-1185">Reference proteome</keyword>
<keyword id="KW-0694">RNA-binding</keyword>
<keyword id="KW-0699">rRNA-binding</keyword>
<name>IF1_PHOLL</name>
<sequence length="72" mass="8236">MAKEDNIEMQGTVLDTLPNTMFRVELENGHVVTAHISGKMRKNYIRILTGDKVTVELTPYDLSKGRIVFRSR</sequence>
<dbReference type="EMBL" id="BX571864">
    <property type="protein sequence ID" value="CAE13888.1"/>
    <property type="molecule type" value="Genomic_DNA"/>
</dbReference>
<dbReference type="RefSeq" id="WP_002211347.1">
    <property type="nucleotide sequence ID" value="NC_005126.1"/>
</dbReference>
<dbReference type="SMR" id="P65114"/>
<dbReference type="STRING" id="243265.plu1595"/>
<dbReference type="GeneID" id="98387575"/>
<dbReference type="KEGG" id="plu:plu1595"/>
<dbReference type="eggNOG" id="COG0361">
    <property type="taxonomic scope" value="Bacteria"/>
</dbReference>
<dbReference type="HOGENOM" id="CLU_151267_1_0_6"/>
<dbReference type="OrthoDB" id="9803250at2"/>
<dbReference type="Proteomes" id="UP000002514">
    <property type="component" value="Chromosome"/>
</dbReference>
<dbReference type="GO" id="GO:0005829">
    <property type="term" value="C:cytosol"/>
    <property type="evidence" value="ECO:0007669"/>
    <property type="project" value="TreeGrafter"/>
</dbReference>
<dbReference type="GO" id="GO:0043022">
    <property type="term" value="F:ribosome binding"/>
    <property type="evidence" value="ECO:0007669"/>
    <property type="project" value="UniProtKB-UniRule"/>
</dbReference>
<dbReference type="GO" id="GO:0019843">
    <property type="term" value="F:rRNA binding"/>
    <property type="evidence" value="ECO:0007669"/>
    <property type="project" value="UniProtKB-UniRule"/>
</dbReference>
<dbReference type="GO" id="GO:0003743">
    <property type="term" value="F:translation initiation factor activity"/>
    <property type="evidence" value="ECO:0007669"/>
    <property type="project" value="UniProtKB-UniRule"/>
</dbReference>
<dbReference type="CDD" id="cd04451">
    <property type="entry name" value="S1_IF1"/>
    <property type="match status" value="1"/>
</dbReference>
<dbReference type="FunFam" id="2.40.50.140:FF:000002">
    <property type="entry name" value="Translation initiation factor IF-1"/>
    <property type="match status" value="1"/>
</dbReference>
<dbReference type="Gene3D" id="2.40.50.140">
    <property type="entry name" value="Nucleic acid-binding proteins"/>
    <property type="match status" value="1"/>
</dbReference>
<dbReference type="HAMAP" id="MF_00075">
    <property type="entry name" value="IF_1"/>
    <property type="match status" value="1"/>
</dbReference>
<dbReference type="InterPro" id="IPR012340">
    <property type="entry name" value="NA-bd_OB-fold"/>
</dbReference>
<dbReference type="InterPro" id="IPR006196">
    <property type="entry name" value="RNA-binding_domain_S1_IF1"/>
</dbReference>
<dbReference type="InterPro" id="IPR003029">
    <property type="entry name" value="S1_domain"/>
</dbReference>
<dbReference type="InterPro" id="IPR004368">
    <property type="entry name" value="TIF_IF1"/>
</dbReference>
<dbReference type="NCBIfam" id="TIGR00008">
    <property type="entry name" value="infA"/>
    <property type="match status" value="1"/>
</dbReference>
<dbReference type="PANTHER" id="PTHR33370">
    <property type="entry name" value="TRANSLATION INITIATION FACTOR IF-1, CHLOROPLASTIC"/>
    <property type="match status" value="1"/>
</dbReference>
<dbReference type="PANTHER" id="PTHR33370:SF1">
    <property type="entry name" value="TRANSLATION INITIATION FACTOR IF-1, CHLOROPLASTIC"/>
    <property type="match status" value="1"/>
</dbReference>
<dbReference type="Pfam" id="PF01176">
    <property type="entry name" value="eIF-1a"/>
    <property type="match status" value="1"/>
</dbReference>
<dbReference type="SMART" id="SM00316">
    <property type="entry name" value="S1"/>
    <property type="match status" value="1"/>
</dbReference>
<dbReference type="SUPFAM" id="SSF50249">
    <property type="entry name" value="Nucleic acid-binding proteins"/>
    <property type="match status" value="1"/>
</dbReference>
<dbReference type="PROSITE" id="PS50832">
    <property type="entry name" value="S1_IF1_TYPE"/>
    <property type="match status" value="1"/>
</dbReference>
<accession>P65114</accession>
<accession>Q8ZGD3</accession>
<organism>
    <name type="scientific">Photorhabdus laumondii subsp. laumondii (strain DSM 15139 / CIP 105565 / TT01)</name>
    <name type="common">Photorhabdus luminescens subsp. laumondii</name>
    <dbReference type="NCBI Taxonomy" id="243265"/>
    <lineage>
        <taxon>Bacteria</taxon>
        <taxon>Pseudomonadati</taxon>
        <taxon>Pseudomonadota</taxon>
        <taxon>Gammaproteobacteria</taxon>
        <taxon>Enterobacterales</taxon>
        <taxon>Morganellaceae</taxon>
        <taxon>Photorhabdus</taxon>
    </lineage>
</organism>
<evidence type="ECO:0000255" key="1">
    <source>
        <dbReference type="HAMAP-Rule" id="MF_00075"/>
    </source>
</evidence>
<feature type="chain" id="PRO_0000095840" description="Translation initiation factor IF-1">
    <location>
        <begin position="1"/>
        <end position="72"/>
    </location>
</feature>
<feature type="domain" description="S1-like" evidence="1">
    <location>
        <begin position="1"/>
        <end position="72"/>
    </location>
</feature>